<organism>
    <name type="scientific">Rattus norvegicus</name>
    <name type="common">Rat</name>
    <dbReference type="NCBI Taxonomy" id="10116"/>
    <lineage>
        <taxon>Eukaryota</taxon>
        <taxon>Metazoa</taxon>
        <taxon>Chordata</taxon>
        <taxon>Craniata</taxon>
        <taxon>Vertebrata</taxon>
        <taxon>Euteleostomi</taxon>
        <taxon>Mammalia</taxon>
        <taxon>Eutheria</taxon>
        <taxon>Euarchontoglires</taxon>
        <taxon>Glires</taxon>
        <taxon>Rodentia</taxon>
        <taxon>Myomorpha</taxon>
        <taxon>Muroidea</taxon>
        <taxon>Muridae</taxon>
        <taxon>Murinae</taxon>
        <taxon>Rattus</taxon>
    </lineage>
</organism>
<name>SC31A_RAT</name>
<feature type="chain" id="PRO_0000295150" description="Protein transport protein Sec31A">
    <location>
        <begin position="1"/>
        <end position="1249"/>
    </location>
</feature>
<feature type="repeat" description="WD 1">
    <location>
        <begin position="4"/>
        <end position="47"/>
    </location>
</feature>
<feature type="repeat" description="WD 2">
    <location>
        <begin position="64"/>
        <end position="111"/>
    </location>
</feature>
<feature type="repeat" description="WD 3">
    <location>
        <begin position="120"/>
        <end position="160"/>
    </location>
</feature>
<feature type="repeat" description="WD 4">
    <location>
        <begin position="166"/>
        <end position="206"/>
    </location>
</feature>
<feature type="repeat" description="WD 5">
    <location>
        <begin position="209"/>
        <end position="254"/>
    </location>
</feature>
<feature type="repeat" description="WD 6">
    <location>
        <begin position="258"/>
        <end position="298"/>
    </location>
</feature>
<feature type="repeat" description="WD 7">
    <location>
        <begin position="301"/>
        <end position="342"/>
    </location>
</feature>
<feature type="repeat" description="WD 8; interaction with SEC13" evidence="4">
    <location>
        <begin position="397"/>
        <end position="429"/>
    </location>
</feature>
<feature type="region of interest" description="Interaction with SEC13" evidence="2">
    <location>
        <begin position="161"/>
        <end position="470"/>
    </location>
</feature>
<feature type="region of interest" description="Disordered" evidence="5">
    <location>
        <begin position="790"/>
        <end position="829"/>
    </location>
</feature>
<feature type="region of interest" description="Interaction with PDCD6" evidence="2">
    <location>
        <begin position="800"/>
        <end position="1142"/>
    </location>
</feature>
<feature type="region of interest" description="Disordered" evidence="5">
    <location>
        <begin position="842"/>
        <end position="940"/>
    </location>
</feature>
<feature type="region of interest" description="Disordered" evidence="5">
    <location>
        <begin position="954"/>
        <end position="1123"/>
    </location>
</feature>
<feature type="short sequence motif" description="ALG-2-binding site motif-2 (ABS-2)," evidence="2">
    <location>
        <begin position="873"/>
        <end position="879"/>
    </location>
</feature>
<feature type="compositionally biased region" description="Polar residues" evidence="5">
    <location>
        <begin position="796"/>
        <end position="805"/>
    </location>
</feature>
<feature type="compositionally biased region" description="Pro residues" evidence="5">
    <location>
        <begin position="898"/>
        <end position="908"/>
    </location>
</feature>
<feature type="compositionally biased region" description="Low complexity" evidence="5">
    <location>
        <begin position="961"/>
        <end position="970"/>
    </location>
</feature>
<feature type="compositionally biased region" description="Low complexity" evidence="5">
    <location>
        <begin position="991"/>
        <end position="1007"/>
    </location>
</feature>
<feature type="compositionally biased region" description="Polar residues" evidence="5">
    <location>
        <begin position="1013"/>
        <end position="1024"/>
    </location>
</feature>
<feature type="compositionally biased region" description="Low complexity" evidence="5">
    <location>
        <begin position="1056"/>
        <end position="1074"/>
    </location>
</feature>
<feature type="modified residue" description="Asymmetric dimethylarginine" evidence="3">
    <location>
        <position position="423"/>
    </location>
</feature>
<feature type="modified residue" description="Phosphoserine" evidence="10 11">
    <location>
        <position position="526"/>
    </location>
</feature>
<feature type="modified residue" description="Phosphoserine" evidence="10 11">
    <location>
        <position position="531"/>
    </location>
</feature>
<feature type="modified residue" description="Phosphoserine" evidence="2">
    <location>
        <position position="799"/>
    </location>
</feature>
<feature type="modified residue" description="Phosphothreonine" evidence="2">
    <location>
        <position position="1190"/>
    </location>
</feature>
<feature type="modified residue" description="Phosphoserine" evidence="11">
    <location>
        <position position="1192"/>
    </location>
</feature>
<feature type="cross-link" description="Glycyl lysine isopeptide (Lys-Gly) (interchain with G-Cter in ubiquitin)" evidence="2">
    <location>
        <position position="647"/>
    </location>
</feature>
<feature type="cross-link" description="Glycyl lysine isopeptide (Lys-Gly) (interchain with G-Cter in ubiquitin)" evidence="2">
    <location>
        <position position="1246"/>
    </location>
</feature>
<feature type="splice variant" id="VSP_026754" description="In isoform 2." evidence="8">
    <location>
        <begin position="503"/>
        <end position="541"/>
    </location>
</feature>
<feature type="splice variant" id="VSP_026755" description="In isoform 2." evidence="8">
    <location>
        <begin position="834"/>
        <end position="864"/>
    </location>
</feature>
<feature type="splice variant" id="VSP_026756" description="In isoform 2." evidence="8">
    <original>PYQPAQQYSLGTGGSAVYRPQQPVAPPASKRYPNAPYVSPVASYSGQPHMYTAQPASSPTSSSAPLPPPPSSGASFQHGGPGAPPSSSAYALPPGTTGTPPAASELPASQRTG</original>
    <variation>R</variation>
    <location>
        <begin position="907"/>
        <end position="1019"/>
    </location>
</feature>
<feature type="sequence conflict" description="In Ref. 1; AAD01990." evidence="9" ref="1">
    <original>D</original>
    <variation>N</variation>
    <location>
        <position position="209"/>
    </location>
</feature>
<feature type="sequence conflict" description="In Ref. 1; AAD01990." evidence="9" ref="1">
    <original>R</original>
    <variation>W</variation>
    <location>
        <position position="213"/>
    </location>
</feature>
<feature type="sequence conflict" description="In Ref. 1; AAD01990." evidence="9" ref="1">
    <original>Q</original>
    <variation>E</variation>
    <location>
        <position position="449"/>
    </location>
</feature>
<feature type="sequence conflict" description="In Ref. 1; AAD01990." evidence="9" ref="1">
    <original>N</original>
    <variation>K</variation>
    <location>
        <position position="479"/>
    </location>
</feature>
<feature type="sequence conflict" description="In Ref. 1; AAD01990." evidence="9" ref="1">
    <original>L</original>
    <variation>F</variation>
    <location>
        <position position="817"/>
    </location>
</feature>
<proteinExistence type="evidence at protein level"/>
<reference key="1">
    <citation type="journal article" date="1999" name="J. Cell Sci.">
        <title>Identification of the putative mammalian orthologue of Sec31P, a component of the COPII coat.</title>
        <authorList>
            <person name="Shugrue C.A."/>
            <person name="Kolen E.R."/>
            <person name="Peters H."/>
            <person name="Czernik A."/>
            <person name="Kaiser C."/>
            <person name="Matovcik L."/>
            <person name="Hubbard A.L."/>
            <person name="Gorelick F."/>
        </authorList>
    </citation>
    <scope>NUCLEOTIDE SEQUENCE [MRNA] (ISOFORM 1)</scope>
    <scope>IDENTIFICATION BY MASS SPECTROMETRY</scope>
    <scope>TISSUE SPECIFICITY</scope>
    <scope>INTERACTION WITH SEC13</scope>
    <scope>SUBCELLULAR LOCATION</scope>
    <source>
        <tissue>Liver</tissue>
    </source>
</reference>
<reference key="2">
    <citation type="journal article" date="2004" name="Genome Res.">
        <title>The status, quality, and expansion of the NIH full-length cDNA project: the Mammalian Gene Collection (MGC).</title>
        <authorList>
            <consortium name="The MGC Project Team"/>
        </authorList>
    </citation>
    <scope>NUCLEOTIDE SEQUENCE [LARGE SCALE MRNA] (ISOFORM 2)</scope>
    <source>
        <tissue>Kidney</tissue>
    </source>
</reference>
<reference key="3">
    <citation type="journal article" date="2000" name="J. Biol. Chem.">
        <title>Mammalian homologues of yeast sec31p. An ubiquitously expressed form is localized to endoplasmic reticulum (ER) exit sites and is essential for ER-Golgi transport.</title>
        <authorList>
            <person name="Tang B.L."/>
            <person name="Zhang T."/>
            <person name="Low D.Y.H."/>
            <person name="Wong E.T."/>
            <person name="Horstmann H."/>
            <person name="Hong W."/>
        </authorList>
    </citation>
    <scope>FUNCTION</scope>
    <scope>SUBCELLULAR LOCATION</scope>
    <scope>INTERACTION WITH SEC13</scope>
</reference>
<reference key="4">
    <citation type="journal article" date="2006" name="J. Proteome Res.">
        <title>Phosphoproteomic analysis of rat liver by high capacity IMAC and LC-MS/MS.</title>
        <authorList>
            <person name="Moser K."/>
            <person name="White F.M."/>
        </authorList>
    </citation>
    <scope>PHOSPHORYLATION [LARGE SCALE ANALYSIS] AT SER-526 AND SER-531</scope>
    <scope>IDENTIFICATION BY MASS SPECTROMETRY [LARGE SCALE ANALYSIS]</scope>
</reference>
<reference key="5">
    <citation type="journal article" date="2012" name="Nat. Commun.">
        <title>Quantitative maps of protein phosphorylation sites across 14 different rat organs and tissues.</title>
        <authorList>
            <person name="Lundby A."/>
            <person name="Secher A."/>
            <person name="Lage K."/>
            <person name="Nordsborg N.B."/>
            <person name="Dmytriyev A."/>
            <person name="Lundby C."/>
            <person name="Olsen J.V."/>
        </authorList>
    </citation>
    <scope>PHOSPHORYLATION [LARGE SCALE ANALYSIS] AT SER-526; SER-531 AND SER-1192</scope>
    <scope>IDENTIFICATION BY MASS SPECTROMETRY [LARGE SCALE ANALYSIS]</scope>
</reference>
<sequence length="1249" mass="135272">MKLKEIDRTAMQAWSPAQNHPIYLATGTSAQQLDATFSTNASLEIFELDLSDPSLDMKSCATFSSSHRYHKLIWGPHKMDSKGDVSGVLIAGGENGNIILYDPSKIIAGDKEVVIAQKDKHTGPVRALDVNIFQTNLVASGANESEIYIWDLNNFATPMTPGAKTQPPEDISCIAWNRQVQHILASASPSGRATVWDLRKNEPIIKVSDHSNRMHCSGLAWHPDVATQMVLASEDDRLPVVQMWDLRFASSPLRVLENHARGILAIAWSMADPELLLSCGKDAKILCSNPNTGEVLYELPTNTQWCFDIQWCPRNPAVLSAASFDGRIRVYSIMGGSIDGLRQKQVDKLSSSFGNLDPFGTGQPLPPLQIPQQTSQHSIVLPLKKPPKWIRRPVGASFSFGGKLVTFENVTGQPQQGAEQPRRQPVFISQVVTEKDFLSRSEQLQHVVQSQGFISYCQKKIDASQTDFEKNVWSFLKVNFEEDSRGKYLELLGYRREDLGEKIALALNRVDGSDVALKDSDRVAQSDGEESPAEEGQLLGERIKEEKQECDFLPSAGGGTFNISVSGDIDGLITRALLTGNFESAVDLCLHDNRMADAIILAIAGGQELLAQTQKKYFAKSQSKITRLITAVVMKNWKEIVESCDLKNWREALAAVLTYAKPDEFSALCDLLGARLESEGDSLLRTQACLCYICAGNVERLVACWTKAQDGSNPLSLQDLIEKVVILRKAVQLTQALDTNTVGALLAEKMSQYANLLAAQGSIAAALAFLPDNTNQPDIVQLRDRLCRAQGRSVPGQESSRSSYEGQPLPKGGPGPLAGHPQVSRVQSQQYYPQVRIAPTVTTWSDRTPTALPSHPPAACPSDTQGGNPPPPGFIMHGNVVPNSPAPLPTSPGHMHSQPPPYPQPQPYQPAQQYSLGTGGSAVYRPQQPVAPPASKRYPNAPYVSPVASYSGQPHMYTAQPASSPTSSSAPLPPPPSSGASFQHGGPGAPPSSSAYALPPGTTGTPPAASELPASQRTGPQNGWNDPPALNRVPKKKKLPENFMPPVPITSPIMNPGGDPQPQGLQQQPSASGPRSSHASFPQPHLAGGQPFHGIQQPLAQTGMPPSFSKPNTEGAPGAPIGNTIQHVQALPTEKITKKPIPDEHLILKTTFEDLIQRCLSSATDPQTKRKLDDASKRLECLYDKLRDQTLSPTIISGLHSIARSIETRNYSEGLTVHTHIVSTSNFSETSAFMPVLKVVLSQASKLGV</sequence>
<accession>Q9Z2Q1</accession>
<accession>Q5RKK4</accession>
<dbReference type="EMBL" id="AF034582">
    <property type="protein sequence ID" value="AAD01990.1"/>
    <property type="molecule type" value="mRNA"/>
</dbReference>
<dbReference type="EMBL" id="BC085722">
    <property type="protein sequence ID" value="AAH85722.1"/>
    <property type="molecule type" value="mRNA"/>
</dbReference>
<dbReference type="PIR" id="T14150">
    <property type="entry name" value="T14150"/>
</dbReference>
<dbReference type="RefSeq" id="NP_148981.1">
    <property type="nucleotide sequence ID" value="NM_033021.1"/>
</dbReference>
<dbReference type="RefSeq" id="XP_006250751.1">
    <molecule id="Q9Z2Q1-2"/>
    <property type="nucleotide sequence ID" value="XM_006250689.5"/>
</dbReference>
<dbReference type="RefSeq" id="XP_006250752.1">
    <molecule id="Q9Z2Q1-2"/>
    <property type="nucleotide sequence ID" value="XM_006250690.4"/>
</dbReference>
<dbReference type="SMR" id="Q9Z2Q1"/>
<dbReference type="BioGRID" id="250159">
    <property type="interactions" value="6"/>
</dbReference>
<dbReference type="FunCoup" id="Q9Z2Q1">
    <property type="interactions" value="3988"/>
</dbReference>
<dbReference type="IntAct" id="Q9Z2Q1">
    <property type="interactions" value="2"/>
</dbReference>
<dbReference type="STRING" id="10116.ENSRNOP00000003072"/>
<dbReference type="GlyGen" id="Q9Z2Q1">
    <property type="glycosylation" value="1 site, 1 O-linked glycan (1 site)"/>
</dbReference>
<dbReference type="iPTMnet" id="Q9Z2Q1"/>
<dbReference type="PhosphoSitePlus" id="Q9Z2Q1"/>
<dbReference type="jPOST" id="Q9Z2Q1"/>
<dbReference type="PaxDb" id="10116-ENSRNOP00000003072"/>
<dbReference type="GeneID" id="93646"/>
<dbReference type="KEGG" id="rno:93646"/>
<dbReference type="AGR" id="RGD:620233"/>
<dbReference type="CTD" id="22872"/>
<dbReference type="RGD" id="620233">
    <property type="gene designation" value="Sec31a"/>
</dbReference>
<dbReference type="VEuPathDB" id="HostDB:ENSRNOG00000002251"/>
<dbReference type="eggNOG" id="KOG0307">
    <property type="taxonomic scope" value="Eukaryota"/>
</dbReference>
<dbReference type="HOGENOM" id="CLU_003033_1_0_1"/>
<dbReference type="InParanoid" id="Q9Z2Q1"/>
<dbReference type="PhylomeDB" id="Q9Z2Q1"/>
<dbReference type="Reactome" id="R-RNO-204005">
    <property type="pathway name" value="COPII-mediated vesicle transport"/>
</dbReference>
<dbReference type="Reactome" id="R-RNO-2132295">
    <property type="pathway name" value="MHC class II antigen presentation"/>
</dbReference>
<dbReference type="Reactome" id="R-RNO-983170">
    <property type="pathway name" value="Antigen Presentation: Folding, assembly and peptide loading of class I MHC"/>
</dbReference>
<dbReference type="PRO" id="PR:Q9Z2Q1"/>
<dbReference type="Proteomes" id="UP000002494">
    <property type="component" value="Chromosome 14"/>
</dbReference>
<dbReference type="Bgee" id="ENSRNOG00000002251">
    <property type="expression patterns" value="Expressed in jejunum and 19 other cell types or tissues"/>
</dbReference>
<dbReference type="ExpressionAtlas" id="Q9Z2Q1">
    <property type="expression patterns" value="baseline and differential"/>
</dbReference>
<dbReference type="GO" id="GO:0030127">
    <property type="term" value="C:COPII vesicle coat"/>
    <property type="evidence" value="ECO:0000250"/>
    <property type="project" value="UniProtKB"/>
</dbReference>
<dbReference type="GO" id="GO:0030134">
    <property type="term" value="C:COPII-coated ER to Golgi transport vesicle"/>
    <property type="evidence" value="ECO:0000250"/>
    <property type="project" value="UniProtKB"/>
</dbReference>
<dbReference type="GO" id="GO:0005737">
    <property type="term" value="C:cytoplasm"/>
    <property type="evidence" value="ECO:0000266"/>
    <property type="project" value="RGD"/>
</dbReference>
<dbReference type="GO" id="GO:0005783">
    <property type="term" value="C:endoplasmic reticulum"/>
    <property type="evidence" value="ECO:0000266"/>
    <property type="project" value="RGD"/>
</dbReference>
<dbReference type="GO" id="GO:0070971">
    <property type="term" value="C:endoplasmic reticulum exit site"/>
    <property type="evidence" value="ECO:0000250"/>
    <property type="project" value="UniProtKB"/>
</dbReference>
<dbReference type="GO" id="GO:0005789">
    <property type="term" value="C:endoplasmic reticulum membrane"/>
    <property type="evidence" value="ECO:0007669"/>
    <property type="project" value="UniProtKB-SubCell"/>
</dbReference>
<dbReference type="GO" id="GO:0005768">
    <property type="term" value="C:endosome"/>
    <property type="evidence" value="ECO:0000314"/>
    <property type="project" value="RGD"/>
</dbReference>
<dbReference type="GO" id="GO:0048471">
    <property type="term" value="C:perinuclear region of cytoplasm"/>
    <property type="evidence" value="ECO:0000266"/>
    <property type="project" value="RGD"/>
</dbReference>
<dbReference type="GO" id="GO:0030120">
    <property type="term" value="C:vesicle coat"/>
    <property type="evidence" value="ECO:0000266"/>
    <property type="project" value="RGD"/>
</dbReference>
<dbReference type="GO" id="GO:0048306">
    <property type="term" value="F:calcium-dependent protein binding"/>
    <property type="evidence" value="ECO:0000266"/>
    <property type="project" value="RGD"/>
</dbReference>
<dbReference type="GO" id="GO:0005198">
    <property type="term" value="F:structural molecule activity"/>
    <property type="evidence" value="ECO:0000318"/>
    <property type="project" value="GO_Central"/>
</dbReference>
<dbReference type="GO" id="GO:0090110">
    <property type="term" value="P:COPII-coated vesicle cargo loading"/>
    <property type="evidence" value="ECO:0000266"/>
    <property type="project" value="RGD"/>
</dbReference>
<dbReference type="GO" id="GO:0007029">
    <property type="term" value="P:endoplasmic reticulum organization"/>
    <property type="evidence" value="ECO:0000318"/>
    <property type="project" value="GO_Central"/>
</dbReference>
<dbReference type="GO" id="GO:0015031">
    <property type="term" value="P:protein transport"/>
    <property type="evidence" value="ECO:0007669"/>
    <property type="project" value="UniProtKB-KW"/>
</dbReference>
<dbReference type="GO" id="GO:0051592">
    <property type="term" value="P:response to calcium ion"/>
    <property type="evidence" value="ECO:0000266"/>
    <property type="project" value="RGD"/>
</dbReference>
<dbReference type="FunFam" id="1.20.940.10:FF:000001">
    <property type="entry name" value="Protein transport protein Sec31A isoform A"/>
    <property type="match status" value="1"/>
</dbReference>
<dbReference type="FunFam" id="2.130.10.10:FF:000009">
    <property type="entry name" value="Protein transport protein Sec31A isoform A"/>
    <property type="match status" value="1"/>
</dbReference>
<dbReference type="FunFam" id="1.25.40.1030:FF:000001">
    <property type="entry name" value="protein transport protein Sec31A isoform X3"/>
    <property type="match status" value="1"/>
</dbReference>
<dbReference type="Gene3D" id="1.25.40.1030">
    <property type="match status" value="1"/>
</dbReference>
<dbReference type="Gene3D" id="1.20.940.10">
    <property type="entry name" value="Functional domain of the splicing factor Prp18"/>
    <property type="match status" value="1"/>
</dbReference>
<dbReference type="Gene3D" id="2.130.10.10">
    <property type="entry name" value="YVTN repeat-like/Quinoprotein amine dehydrogenase"/>
    <property type="match status" value="1"/>
</dbReference>
<dbReference type="InterPro" id="IPR024298">
    <property type="entry name" value="Sec16_Sec23-bd"/>
</dbReference>
<dbReference type="InterPro" id="IPR040251">
    <property type="entry name" value="SEC31-like"/>
</dbReference>
<dbReference type="InterPro" id="IPR015943">
    <property type="entry name" value="WD40/YVTN_repeat-like_dom_sf"/>
</dbReference>
<dbReference type="InterPro" id="IPR036322">
    <property type="entry name" value="WD40_repeat_dom_sf"/>
</dbReference>
<dbReference type="InterPro" id="IPR001680">
    <property type="entry name" value="WD40_rpt"/>
</dbReference>
<dbReference type="PANTHER" id="PTHR13923:SF23">
    <property type="entry name" value="PROTEIN TRANSPORT PROTEIN SEC31A"/>
    <property type="match status" value="1"/>
</dbReference>
<dbReference type="PANTHER" id="PTHR13923">
    <property type="entry name" value="SEC31-RELATED PROTEIN"/>
    <property type="match status" value="1"/>
</dbReference>
<dbReference type="Pfam" id="PF12931">
    <property type="entry name" value="TPR_Sec16"/>
    <property type="match status" value="1"/>
</dbReference>
<dbReference type="SMART" id="SM00320">
    <property type="entry name" value="WD40"/>
    <property type="match status" value="6"/>
</dbReference>
<dbReference type="SUPFAM" id="SSF50978">
    <property type="entry name" value="WD40 repeat-like"/>
    <property type="match status" value="1"/>
</dbReference>
<dbReference type="PROSITE" id="PS50082">
    <property type="entry name" value="WD_REPEATS_2"/>
    <property type="match status" value="1"/>
</dbReference>
<dbReference type="PROSITE" id="PS50294">
    <property type="entry name" value="WD_REPEATS_REGION"/>
    <property type="match status" value="1"/>
</dbReference>
<protein>
    <recommendedName>
        <fullName>Protein transport protein Sec31A</fullName>
    </recommendedName>
    <alternativeName>
        <fullName>SEC31-like protein 1</fullName>
    </alternativeName>
    <alternativeName>
        <fullName>SEC31-related protein A</fullName>
    </alternativeName>
    <alternativeName>
        <fullName>Vesicle-associated protein 1</fullName>
    </alternativeName>
</protein>
<evidence type="ECO:0000250" key="1"/>
<evidence type="ECO:0000250" key="2">
    <source>
        <dbReference type="UniProtKB" id="O94979"/>
    </source>
</evidence>
<evidence type="ECO:0000250" key="3">
    <source>
        <dbReference type="UniProtKB" id="Q3UPL0"/>
    </source>
</evidence>
<evidence type="ECO:0000255" key="4">
    <source>
        <dbReference type="PROSITE-ProRule" id="PRU00221"/>
    </source>
</evidence>
<evidence type="ECO:0000256" key="5">
    <source>
        <dbReference type="SAM" id="MobiDB-lite"/>
    </source>
</evidence>
<evidence type="ECO:0000269" key="6">
    <source>
    </source>
</evidence>
<evidence type="ECO:0000269" key="7">
    <source>
    </source>
</evidence>
<evidence type="ECO:0000303" key="8">
    <source>
    </source>
</evidence>
<evidence type="ECO:0000305" key="9"/>
<evidence type="ECO:0007744" key="10">
    <source>
    </source>
</evidence>
<evidence type="ECO:0007744" key="11">
    <source>
    </source>
</evidence>
<gene>
    <name type="primary">Sec31a</name>
    <name type="synonym">Sec31l1</name>
    <name type="synonym">Vap1</name>
</gene>
<comment type="function">
    <text evidence="7">Component of the coat protein complex II (COPII) which promotes the formation of transport vesicles from the endoplasmic reticulum (ER). The coat has two main functions, the physical deformation of the endoplasmic reticulum membrane into vesicles and the selection of cargo molecules.</text>
</comment>
<comment type="subunit">
    <text evidence="1 2 6 7">COPII is composed of at least 5 proteins: the SEC23/24 complex, the SEC13/31 complex and SAR1. SEC13 and SEC31 make a 2:2 tetramer that forms the edge element of the COPII outer coat. The tetramer self-assembles in multiple copies to form the complete polyhedral cage. Interacts (via WD 8) with SEC13 (PubMed:10574704, PubMed:10788476). Interacts with PDCD6; interaction takes place in response to cytosolic calcium increase and leads to bridge together the BCR(KLHL12) complex and SEC31A, leading to monoubiquitination. Interacts with KLHL12 (By similarity).</text>
</comment>
<comment type="subcellular location">
    <subcellularLocation>
        <location evidence="6">Cytoplasm</location>
    </subcellularLocation>
    <subcellularLocation>
        <location evidence="6">Cytoplasmic vesicle</location>
        <location evidence="6">COPII-coated vesicle membrane</location>
        <topology>Peripheral membrane protein</topology>
        <orientation>Cytoplasmic side</orientation>
    </subcellularLocation>
    <subcellularLocation>
        <location evidence="6">Endoplasmic reticulum membrane</location>
        <topology>Peripheral membrane protein</topology>
    </subcellularLocation>
    <text evidence="3 6">Associates with membranes in a GTP-dependent manner (PubMed:10574704). Localizes to endoplasmic reticulum exit sites (ERES), also known as transitional endoplasmic reticulum (tER) (By similarity).</text>
</comment>
<comment type="alternative products">
    <event type="alternative splicing"/>
    <isoform>
        <id>Q9Z2Q1-1</id>
        <name>1</name>
        <sequence type="displayed"/>
    </isoform>
    <isoform>
        <id>Q9Z2Q1-2</id>
        <name>2</name>
        <sequence type="described" ref="VSP_026754 VSP_026755 VSP_026756"/>
    </isoform>
</comment>
<comment type="tissue specificity">
    <text evidence="6">Ubiquitously expressed.</text>
</comment>
<comment type="domain">
    <text evidence="2">The ALG-2-binding site motif-2 (ABS-2) contains a PXPGF sequence that binds hydrophobic pocket 3 of PDCD6.</text>
</comment>
<comment type="PTM">
    <text evidence="2">Monoubiquitinated by the BCR(KLHL12) E3 ubiquitin ligase complex, leading to regulate the size of COPII coats.</text>
</comment>
<comment type="similarity">
    <text evidence="9">Belongs to the WD repeat SEC31 family.</text>
</comment>
<keyword id="KW-0025">Alternative splicing</keyword>
<keyword id="KW-0963">Cytoplasm</keyword>
<keyword id="KW-0968">Cytoplasmic vesicle</keyword>
<keyword id="KW-0256">Endoplasmic reticulum</keyword>
<keyword id="KW-0931">ER-Golgi transport</keyword>
<keyword id="KW-1017">Isopeptide bond</keyword>
<keyword id="KW-0472">Membrane</keyword>
<keyword id="KW-0488">Methylation</keyword>
<keyword id="KW-0597">Phosphoprotein</keyword>
<keyword id="KW-0653">Protein transport</keyword>
<keyword id="KW-1185">Reference proteome</keyword>
<keyword id="KW-0677">Repeat</keyword>
<keyword id="KW-0813">Transport</keyword>
<keyword id="KW-0832">Ubl conjugation</keyword>
<keyword id="KW-0853">WD repeat</keyword>